<name>CAP2_VIBCH</name>
<evidence type="ECO:0000250" key="1">
    <source>
        <dbReference type="UniProtKB" id="P0DTF2"/>
    </source>
</evidence>
<evidence type="ECO:0000250" key="2">
    <source>
        <dbReference type="UniProtKB" id="P0DX82"/>
    </source>
</evidence>
<evidence type="ECO:0000269" key="3">
    <source>
    </source>
</evidence>
<evidence type="ECO:0000269" key="4">
    <source>
    </source>
</evidence>
<evidence type="ECO:0000269" key="5">
    <source>
    </source>
</evidence>
<evidence type="ECO:0000269" key="6">
    <source>
    </source>
</evidence>
<evidence type="ECO:0000303" key="7">
    <source>
    </source>
</evidence>
<evidence type="ECO:0000303" key="8">
    <source>
    </source>
</evidence>
<evidence type="ECO:0000303" key="9">
    <source>
    </source>
</evidence>
<evidence type="ECO:0000305" key="10"/>
<evidence type="ECO:0000305" key="11">
    <source>
    </source>
</evidence>
<evidence type="ECO:0000305" key="12">
    <source>
    </source>
</evidence>
<evidence type="ECO:0000305" key="13">
    <source>
    </source>
</evidence>
<evidence type="ECO:0000312" key="14">
    <source>
        <dbReference type="EMBL" id="AAF93356.1"/>
    </source>
</evidence>
<reference key="1">
    <citation type="journal article" date="2000" name="Nature">
        <title>DNA sequence of both chromosomes of the cholera pathogen Vibrio cholerae.</title>
        <authorList>
            <person name="Heidelberg J.F."/>
            <person name="Eisen J.A."/>
            <person name="Nelson W.C."/>
            <person name="Clayton R.A."/>
            <person name="Gwinn M.L."/>
            <person name="Dodson R.J."/>
            <person name="Haft D.H."/>
            <person name="Hickey E.K."/>
            <person name="Peterson J.D."/>
            <person name="Umayam L.A."/>
            <person name="Gill S.R."/>
            <person name="Nelson K.E."/>
            <person name="Read T.D."/>
            <person name="Tettelin H."/>
            <person name="Richardson D.L."/>
            <person name="Ermolaeva M.D."/>
            <person name="Vamathevan J.J."/>
            <person name="Bass S."/>
            <person name="Qin H."/>
            <person name="Dragoi I."/>
            <person name="Sellers P."/>
            <person name="McDonald L.A."/>
            <person name="Utterback T.R."/>
            <person name="Fleischmann R.D."/>
            <person name="Nierman W.C."/>
            <person name="White O."/>
            <person name="Salzberg S.L."/>
            <person name="Smith H.O."/>
            <person name="Colwell R.R."/>
            <person name="Mekalanos J.J."/>
            <person name="Venter J.C."/>
            <person name="Fraser C.M."/>
        </authorList>
    </citation>
    <scope>NUCLEOTIDE SEQUENCE [LARGE SCALE GENOMIC DNA]</scope>
    <source>
        <strain>ATCC 39315 / El Tor Inaba N16961</strain>
    </source>
</reference>
<reference key="2">
    <citation type="journal article" date="2019" name="Nature">
        <title>Cyclic GMP-AMP signalling protects bacteria against viral infection.</title>
        <authorList>
            <person name="Cohen D."/>
            <person name="Melamed S."/>
            <person name="Millman A."/>
            <person name="Shulman G."/>
            <person name="Oppenheimer-Shaanan Y."/>
            <person name="Kacen A."/>
            <person name="Doron S."/>
            <person name="Amitai G."/>
            <person name="Sorek R."/>
        </authorList>
    </citation>
    <scope>ANTIVIRAL DEFENSE</scope>
    <scope>OPERON STRUCTURE</scope>
    <source>
        <strain>ATCC 39315 / El Tor Inaba N16961</strain>
    </source>
</reference>
<reference key="3">
    <citation type="journal article" date="2020" name="Cell">
        <title>CBASS immunity uses CARF-related effectors to sense 3'-5' and 2'-5'-linked cyclic oligonucleotide signals and protect bacteria from phage infection.</title>
        <authorList>
            <person name="Lowey B."/>
            <person name="Whiteley A.T."/>
            <person name="Keszei A.F.A."/>
            <person name="Morehouse B.R."/>
            <person name="Antine S.P."/>
            <person name="Cabrera V.J."/>
            <person name="Kashin D."/>
            <person name="Schwede F."/>
            <person name="Mekalanos J.J."/>
            <person name="Shao S."/>
            <person name="Lee A.S.Y."/>
            <person name="Kranzusch P.J."/>
        </authorList>
    </citation>
    <scope>ANTIVIRAL DEFENSE</scope>
    <scope>NOMENCLATURE</scope>
    <scope>OPERON STRUCTURE</scope>
    <source>
        <strain>El Tor C6706</strain>
    </source>
</reference>
<reference key="4">
    <citation type="journal article" date="2020" name="Nat. Microbiol.">
        <title>Diversity and classification of cyclic-oligonucleotide-based anti-phage signalling systems.</title>
        <authorList>
            <person name="Millman A."/>
            <person name="Melamed S."/>
            <person name="Amitai G."/>
            <person name="Sorek R."/>
        </authorList>
    </citation>
    <scope>CLASSIFICATION AND NOMENCLATURE</scope>
</reference>
<reference key="5">
    <citation type="journal article" date="2023" name="Nature">
        <title>An E1-E2 fusion protein primes antiviral immune signalling in bacteria.</title>
        <authorList>
            <person name="Ledvina H.E."/>
            <person name="Ye Q."/>
            <person name="Gu Y."/>
            <person name="Sullivan A.E."/>
            <person name="Quan Y."/>
            <person name="Lau R.K."/>
            <person name="Zhou H."/>
            <person name="Corbett K.D."/>
            <person name="Whiteley A.T."/>
        </authorList>
    </citation>
    <scope>FUNCTION AS A PROTEIN TRANSFERASE</scope>
    <scope>ANTIVIRAL DEFENSE</scope>
    <scope>PROBABLE ACTIVE SITES</scope>
    <scope>INTERACTION WITH DNCV</scope>
    <scope>DISRUPTION PHENOTYPE</scope>
    <scope>MUTAGENESIS OF CYS-90; ARG-390 AND CYS-522</scope>
    <source>
        <strain>El Tor C6706</strain>
    </source>
</reference>
<reference key="6">
    <citation type="journal article" date="2023" name="Nature">
        <title>Ubiquitin-like conjugation by bacterial cGAS enhances anti-phage defence.</title>
        <authorList>
            <person name="Jenson J.M."/>
            <person name="Li T."/>
            <person name="Du F."/>
            <person name="Ea C.K."/>
            <person name="Chen Z.J."/>
        </authorList>
    </citation>
    <scope>FUNCTION AS A PROTEIN TRANSFERASE</scope>
    <scope>ANTIVIRAL DEFENSE</scope>
    <scope>MUTAGENESIS OF CYS-90 AND 490-CYS--CYS-493</scope>
    <source>
        <strain>El Tor C6706</strain>
    </source>
</reference>
<comment type="function">
    <text evidence="3 4 5 8">CD-NTase priming component of a CBASS antiviral system (PubMed:36755092). CBASS (cyclic oligonucleotide-based antiphage signaling system) provides immunity against bacteriophages. The CD-NTase protein (DncV) synthesizes cyclic nucleotides in response to infection; these serve as specific second messenger signals. The signals activate a diverse range of effectors, leading to bacterial cell death and thus abortive phage infection (PubMed:31533127, PubMed:32544385, PubMed:36755092). A type II-A(GA) CBASS system (PubMed:32839535).</text>
</comment>
<comment type="function">
    <text evidence="1 5 6 13">Primes DncV; acts as a protein transferase, conjugating DncV, the CD-NTase, to unidentified target(s) in the cell via an E1-E2 ubiquitin transferase-like mechanism (PubMed:36755092, PubMed:36848932). During the conjugation reaction DncV is probably transiently attached to AMP (Probable) (PubMed:36755092, PubMed:36848932). Protein conjugation requires ATP (By similarity).</text>
</comment>
<comment type="function">
    <text evidence="3 4 5 6">Protects E.coli against phage infection. When the CBASS operon (capV-dncV-cap2-cap3) is introduced in E.coli MG1655 there is about 100-fold protection against phages P1 and T2 (PubMed:31533127). When the operon is introduced in E.coli MG1655 there is a more than 10(3) decrease in the efficiency of T2 plaque formation. Protects 100-fold against phage T5, offers no protection against T7 (PubMed:32544385). When the operon is introduced in E.coli MG1655 it protects against phages T2, T4, T5 and T6 (PubMed:36755092). Another paper shows the operon confers protection against phages P1, T2, T5 and T6 but not T4 or lambda (PubMed:36848932).</text>
</comment>
<comment type="subunit">
    <text evidence="2 5">Interacts with CD-NTase DncV in the presence and absence of phage T2 (PubMed:36755092). A Cap2 dimer is bound on either side by a DncV monomer (By similarity).</text>
</comment>
<comment type="induction">
    <text evidence="11 12">Part of a CBASS operon consisting of capV-dncV-cap2-cap3.</text>
</comment>
<comment type="domain">
    <text evidence="2">Has an N-terminal E2-like domain, a linker and a C-terminal adenylation plus E1-like domain, dimerizes via the E1-like domain.</text>
</comment>
<comment type="disruption phenotype">
    <text evidence="5">Essential for CBASS function; when the operon missing this gene is introduced in E.coli it no longer protects against phages T2, T4, T5 or T6 (PubMed:36755092).</text>
</comment>
<comment type="similarity">
    <text evidence="10">In the C-terminal section; belongs to the HesA/MoeB/ThiF family.</text>
</comment>
<protein>
    <recommendedName>
        <fullName evidence="9">ATP-dependent ubiquitin transferase-like protein Cap2</fullName>
        <ecNumber evidence="5 6">2.3.2.-</ecNumber>
    </recommendedName>
    <alternativeName>
        <fullName evidence="7">CD-NTase-associated protein 2</fullName>
        <shortName evidence="7">Cap2</shortName>
    </alternativeName>
</protein>
<accession>Q9KVG6</accession>
<keyword id="KW-0051">Antiviral defense</keyword>
<keyword id="KW-1017">Isopeptide bond</keyword>
<keyword id="KW-1185">Reference proteome</keyword>
<keyword id="KW-0808">Transferase</keyword>
<proteinExistence type="evidence at protein level"/>
<organism>
    <name type="scientific">Vibrio cholerae serotype O1 (strain ATCC 39315 / El Tor Inaba N16961)</name>
    <dbReference type="NCBI Taxonomy" id="243277"/>
    <lineage>
        <taxon>Bacteria</taxon>
        <taxon>Pseudomonadati</taxon>
        <taxon>Pseudomonadota</taxon>
        <taxon>Gammaproteobacteria</taxon>
        <taxon>Vibrionales</taxon>
        <taxon>Vibrionaceae</taxon>
        <taxon>Vibrio</taxon>
    </lineage>
</organism>
<gene>
    <name evidence="7" type="primary">cap2</name>
    <name evidence="14" type="ordered locus">VC_0180</name>
</gene>
<sequence length="584" mass="65493">MKQELHHTLLGCGFRYTPAKQMPKGILLDTKSRRKGYYVKEYSTKGGVFVIALVLWNDPHIQLPFAYILQQPEQYKGRLLPHINFGFCLCYVTQMEADWNSNDLKSTYQDVDEQIQLTLDNSVASVESGTSNDVELEGEFSAYWQSEEELYLLAKPSRKAQLKAHLVEAELSSGSIRREYVAACSEQSEELVKWLNQRKFDESSLQEVSITTHCISVKPNRLAGVNWPPSCLREVLSWLKLVDYSAHARTVTLLMAKRTKRHILLFDVEGQDELAVYLELNLDVIGKRYFGRNAARKRNINNEAALLGGKFVSANFKRLGVTRADRDTLLSRNQSRPDVGNLSQKRIALIGCGTIGGYLAELLLRSGAGCGENYFHLYDNDSFKPHNFARHSLTAHNFGLAKSIALANSLKEAVHIAQSIKGIDRQFPIQADVLSKYDIVIDATGRPPVSKRLAAVARTLIADIRPVLIHAFNDGNGRASKVLVDDGRCCYGCMMADPAVYRNNIDLRFEGIDLAKEKHISCGSTYTPYDAAVSHITAALAQEAVLNTLEHTLPWNYSEHMLDGSRSKKPRTLKRFSGCNICDE</sequence>
<feature type="chain" id="PRO_0000451857" description="ATP-dependent ubiquitin transferase-like protein Cap2">
    <location>
        <begin position="1"/>
        <end position="584"/>
    </location>
</feature>
<feature type="region of interest" description="E2-like domain" evidence="13">
    <location>
        <begin position="1"/>
        <end position="137"/>
    </location>
</feature>
<feature type="region of interest" description="Linker domain" evidence="13">
    <location>
        <begin position="138"/>
        <end position="338"/>
    </location>
</feature>
<feature type="region of interest" description="Adenylation plus E1-like domain" evidence="13">
    <location>
        <begin position="339"/>
        <end position="584"/>
    </location>
</feature>
<feature type="active site" description="For E2-like domain" evidence="13">
    <location>
        <position position="90"/>
    </location>
</feature>
<feature type="active site" description="For E1-like domain" evidence="13">
    <location>
        <position position="522"/>
    </location>
</feature>
<feature type="site" description="Adenylated" evidence="13">
    <location>
        <position position="390"/>
    </location>
</feature>
<feature type="mutagenesis site" description="Loss of defense against phages T2, T4, T5 or T6 but not P1, unchanged interaction with DncV, no DncV conjugates in vivo, purified DncV is not highly activated." evidence="5 6">
    <original>C</original>
    <variation>A</variation>
    <location>
        <position position="90"/>
    </location>
</feature>
<feature type="mutagenesis site" description="Loss of defense against phages T2, T4, T5 or T6, significantly decreased interaction with DncV, no DncV conjugates in vivo." evidence="5">
    <original>R</original>
    <variation>A</variation>
    <location>
        <position position="390"/>
    </location>
</feature>
<feature type="mutagenesis site" description="Loss of defense against phages P1, T2, T5 and T6." evidence="6">
    <original>CYGC</original>
    <variation>AYGA</variation>
    <location>
        <begin position="490"/>
        <end position="493"/>
    </location>
</feature>
<feature type="mutagenesis site" description="Loss of defense against phages T2, T4, T5 or T6, significantly decreased interaction with DncV, no DncV conjugates in vivo, purified DncV is not highly activated." evidence="5">
    <original>C</original>
    <variation>A</variation>
    <location>
        <position position="522"/>
    </location>
</feature>
<dbReference type="EC" id="2.3.2.-" evidence="5 6"/>
<dbReference type="EMBL" id="AE003852">
    <property type="protein sequence ID" value="AAF93356.1"/>
    <property type="molecule type" value="Genomic_DNA"/>
</dbReference>
<dbReference type="PIR" id="G82354">
    <property type="entry name" value="G82354"/>
</dbReference>
<dbReference type="RefSeq" id="NP_229837.1">
    <property type="nucleotide sequence ID" value="NC_002505.1"/>
</dbReference>
<dbReference type="RefSeq" id="WP_001884104.1">
    <property type="nucleotide sequence ID" value="NZ_LT906614.1"/>
</dbReference>
<dbReference type="SMR" id="Q9KVG6"/>
<dbReference type="STRING" id="243277.VC_0180"/>
<dbReference type="DNASU" id="2614191"/>
<dbReference type="EnsemblBacteria" id="AAF93356">
    <property type="protein sequence ID" value="AAF93356"/>
    <property type="gene ID" value="VC_0180"/>
</dbReference>
<dbReference type="KEGG" id="vch:VC_0180"/>
<dbReference type="PATRIC" id="fig|243277.26.peg.164"/>
<dbReference type="eggNOG" id="COG0476">
    <property type="taxonomic scope" value="Bacteria"/>
</dbReference>
<dbReference type="HOGENOM" id="CLU_032708_1_0_6"/>
<dbReference type="Proteomes" id="UP000000584">
    <property type="component" value="Chromosome 1"/>
</dbReference>
<dbReference type="GO" id="GO:0016740">
    <property type="term" value="F:transferase activity"/>
    <property type="evidence" value="ECO:0007669"/>
    <property type="project" value="UniProtKB-KW"/>
</dbReference>
<dbReference type="GO" id="GO:0061503">
    <property type="term" value="F:tRNA threonylcarbamoyladenosine dehydratase"/>
    <property type="evidence" value="ECO:0000318"/>
    <property type="project" value="GO_Central"/>
</dbReference>
<dbReference type="GO" id="GO:0008641">
    <property type="term" value="F:ubiquitin-like modifier activating enzyme activity"/>
    <property type="evidence" value="ECO:0007669"/>
    <property type="project" value="InterPro"/>
</dbReference>
<dbReference type="GO" id="GO:0061504">
    <property type="term" value="P:cyclic threonylcarbamoyladenosine biosynthetic process"/>
    <property type="evidence" value="ECO:0000318"/>
    <property type="project" value="GO_Central"/>
</dbReference>
<dbReference type="GO" id="GO:0051607">
    <property type="term" value="P:defense response to virus"/>
    <property type="evidence" value="ECO:0007669"/>
    <property type="project" value="UniProtKB-KW"/>
</dbReference>
<dbReference type="CDD" id="cd01483">
    <property type="entry name" value="E1_enzyme_family"/>
    <property type="match status" value="1"/>
</dbReference>
<dbReference type="Gene3D" id="3.40.50.720">
    <property type="entry name" value="NAD(P)-binding Rossmann-like Domain"/>
    <property type="match status" value="1"/>
</dbReference>
<dbReference type="InterPro" id="IPR032701">
    <property type="entry name" value="Prok-E2_B_dom"/>
</dbReference>
<dbReference type="InterPro" id="IPR045886">
    <property type="entry name" value="ThiF/MoeB/HesA"/>
</dbReference>
<dbReference type="InterPro" id="IPR000594">
    <property type="entry name" value="ThiF_NAD_FAD-bd"/>
</dbReference>
<dbReference type="InterPro" id="IPR035985">
    <property type="entry name" value="Ubiquitin-activating_enz"/>
</dbReference>
<dbReference type="PANTHER" id="PTHR43267">
    <property type="entry name" value="TRNA THREONYLCARBAMOYLADENOSINE DEHYDRATASE"/>
    <property type="match status" value="1"/>
</dbReference>
<dbReference type="PANTHER" id="PTHR43267:SF1">
    <property type="entry name" value="TRNA THREONYLCARBAMOYLADENOSINE DEHYDRATASE"/>
    <property type="match status" value="1"/>
</dbReference>
<dbReference type="Pfam" id="PF14461">
    <property type="entry name" value="Prok-E2_B"/>
    <property type="match status" value="1"/>
</dbReference>
<dbReference type="Pfam" id="PF00899">
    <property type="entry name" value="ThiF"/>
    <property type="match status" value="1"/>
</dbReference>
<dbReference type="SUPFAM" id="SSF69572">
    <property type="entry name" value="Activating enzymes of the ubiquitin-like proteins"/>
    <property type="match status" value="1"/>
</dbReference>